<accession>P9WKC8</accession>
<accession>E0YJK4</accession>
<accession>F2GJ38</accession>
<accession>O07035</accession>
<accession>P0A650</accession>
<reference key="1">
    <citation type="journal article" date="2002" name="J. Bacteriol.">
        <title>Whole-genome comparison of Mycobacterium tuberculosis clinical and laboratory strains.</title>
        <authorList>
            <person name="Fleischmann R.D."/>
            <person name="Alland D."/>
            <person name="Eisen J.A."/>
            <person name="Carpenter L."/>
            <person name="White O."/>
            <person name="Peterson J.D."/>
            <person name="DeBoy R.T."/>
            <person name="Dodson R.J."/>
            <person name="Gwinn M.L."/>
            <person name="Haft D.H."/>
            <person name="Hickey E.K."/>
            <person name="Kolonay J.F."/>
            <person name="Nelson W.C."/>
            <person name="Umayam L.A."/>
            <person name="Ermolaeva M.D."/>
            <person name="Salzberg S.L."/>
            <person name="Delcher A."/>
            <person name="Utterback T.R."/>
            <person name="Weidman J.F."/>
            <person name="Khouri H.M."/>
            <person name="Gill J."/>
            <person name="Mikula A."/>
            <person name="Bishai W."/>
            <person name="Jacobs W.R. Jr."/>
            <person name="Venter J.C."/>
            <person name="Fraser C.M."/>
        </authorList>
    </citation>
    <scope>NUCLEOTIDE SEQUENCE [LARGE SCALE GENOMIC DNA]</scope>
    <source>
        <strain>CDC 1551 / Oshkosh</strain>
    </source>
</reference>
<reference key="2">
    <citation type="journal article" date="2003" name="J. Exp. Med.">
        <title>Inhibition of respiration by nitric oxide induces a Mycobacterium tuberculosis dormancy program.</title>
        <authorList>
            <person name="Voskuil M.I."/>
            <person name="Schnappinger D."/>
            <person name="Visconti K.C."/>
            <person name="Harrell M.I."/>
            <person name="Dolganov G.M."/>
            <person name="Sherman D.R."/>
            <person name="Schoolnik G.K."/>
        </authorList>
    </citation>
    <scope>INDUCTION BY NITRIC OXIDE (NO) AND BY HYPOXIA</scope>
    <scope>DORMANCY REGULON</scope>
    <source>
        <strain>CDC 1551 / Oshkosh</strain>
    </source>
</reference>
<feature type="chain" id="PRO_0000427676" description="Probable diacyglycerol O-acyltransferase tgs1">
    <location>
        <begin position="1"/>
        <end position="463"/>
    </location>
</feature>
<feature type="active site" description="Proton acceptor" evidence="2">
    <location>
        <position position="137"/>
    </location>
</feature>
<keyword id="KW-0012">Acyltransferase</keyword>
<keyword id="KW-0319">Glycerol metabolism</keyword>
<keyword id="KW-0444">Lipid biosynthesis</keyword>
<keyword id="KW-0443">Lipid metabolism</keyword>
<keyword id="KW-1185">Reference proteome</keyword>
<keyword id="KW-0808">Transferase</keyword>
<organism>
    <name type="scientific">Mycobacterium tuberculosis (strain CDC 1551 / Oshkosh)</name>
    <dbReference type="NCBI Taxonomy" id="83331"/>
    <lineage>
        <taxon>Bacteria</taxon>
        <taxon>Bacillati</taxon>
        <taxon>Actinomycetota</taxon>
        <taxon>Actinomycetes</taxon>
        <taxon>Mycobacteriales</taxon>
        <taxon>Mycobacteriaceae</taxon>
        <taxon>Mycobacterium</taxon>
        <taxon>Mycobacterium tuberculosis complex</taxon>
    </lineage>
</organism>
<gene>
    <name type="primary">tgs1</name>
    <name type="ordered locus">MT3216</name>
</gene>
<evidence type="ECO:0000250" key="1">
    <source>
        <dbReference type="UniProtKB" id="P9WKC9"/>
    </source>
</evidence>
<evidence type="ECO:0000255" key="2"/>
<evidence type="ECO:0000269" key="3">
    <source>
    </source>
</evidence>
<evidence type="ECO:0000305" key="4"/>
<dbReference type="EC" id="2.3.1.20" evidence="1"/>
<dbReference type="EMBL" id="AE000516">
    <property type="protein sequence ID" value="AAK47554.1"/>
    <property type="molecule type" value="Genomic_DNA"/>
</dbReference>
<dbReference type="PIR" id="H70922">
    <property type="entry name" value="H70922"/>
</dbReference>
<dbReference type="RefSeq" id="WP_003917740.1">
    <property type="nucleotide sequence ID" value="NC_002755.2"/>
</dbReference>
<dbReference type="SMR" id="P9WKC8"/>
<dbReference type="KEGG" id="mtc:MT3216"/>
<dbReference type="PATRIC" id="fig|83331.31.peg.3466"/>
<dbReference type="HOGENOM" id="CLU_024186_3_1_11"/>
<dbReference type="UniPathway" id="UPA00282"/>
<dbReference type="Proteomes" id="UP000001020">
    <property type="component" value="Chromosome"/>
</dbReference>
<dbReference type="GO" id="GO:0005886">
    <property type="term" value="C:plasma membrane"/>
    <property type="evidence" value="ECO:0007669"/>
    <property type="project" value="TreeGrafter"/>
</dbReference>
<dbReference type="GO" id="GO:0004144">
    <property type="term" value="F:diacylglycerol O-acyltransferase activity"/>
    <property type="evidence" value="ECO:0007669"/>
    <property type="project" value="UniProtKB-EC"/>
</dbReference>
<dbReference type="GO" id="GO:0051701">
    <property type="term" value="P:biological process involved in interaction with host"/>
    <property type="evidence" value="ECO:0007669"/>
    <property type="project" value="TreeGrafter"/>
</dbReference>
<dbReference type="GO" id="GO:0006071">
    <property type="term" value="P:glycerol metabolic process"/>
    <property type="evidence" value="ECO:0007669"/>
    <property type="project" value="UniProtKB-KW"/>
</dbReference>
<dbReference type="GO" id="GO:0001666">
    <property type="term" value="P:response to hypoxia"/>
    <property type="evidence" value="ECO:0007669"/>
    <property type="project" value="TreeGrafter"/>
</dbReference>
<dbReference type="GO" id="GO:0071731">
    <property type="term" value="P:response to nitric oxide"/>
    <property type="evidence" value="ECO:0007669"/>
    <property type="project" value="TreeGrafter"/>
</dbReference>
<dbReference type="GO" id="GO:0019432">
    <property type="term" value="P:triglyceride biosynthetic process"/>
    <property type="evidence" value="ECO:0007669"/>
    <property type="project" value="UniProtKB-UniPathway"/>
</dbReference>
<dbReference type="InterPro" id="IPR014292">
    <property type="entry name" value="Acyl_transf_WS/DGAT"/>
</dbReference>
<dbReference type="InterPro" id="IPR045034">
    <property type="entry name" value="O-acyltransferase_WSD1-like"/>
</dbReference>
<dbReference type="InterPro" id="IPR009721">
    <property type="entry name" value="O-acyltransferase_WSD1_C"/>
</dbReference>
<dbReference type="InterPro" id="IPR004255">
    <property type="entry name" value="O-acyltransferase_WSD1_N"/>
</dbReference>
<dbReference type="NCBIfam" id="TIGR02946">
    <property type="entry name" value="acyl_WS_DGAT"/>
    <property type="match status" value="1"/>
</dbReference>
<dbReference type="PANTHER" id="PTHR31650">
    <property type="entry name" value="O-ACYLTRANSFERASE (WSD1-LIKE) FAMILY PROTEIN"/>
    <property type="match status" value="1"/>
</dbReference>
<dbReference type="PANTHER" id="PTHR31650:SF1">
    <property type="entry name" value="WAX ESTER SYNTHASE_DIACYLGLYCEROL ACYLTRANSFERASE 4-RELATED"/>
    <property type="match status" value="1"/>
</dbReference>
<dbReference type="Pfam" id="PF06974">
    <property type="entry name" value="WS_DGAT_C"/>
    <property type="match status" value="1"/>
</dbReference>
<dbReference type="Pfam" id="PF03007">
    <property type="entry name" value="WS_DGAT_cat"/>
    <property type="match status" value="1"/>
</dbReference>
<dbReference type="SUPFAM" id="SSF52777">
    <property type="entry name" value="CoA-dependent acyltransferases"/>
    <property type="match status" value="1"/>
</dbReference>
<sequence length="463" mass="50755">MNHLTTLDAGFLKAEDVDRHVSLAIGALAVIEGPAPDQEAFLSSLAQRLRPCTRFGQRLRLRPFDLGAPKWVDDPDFDLGRHVWRIALPRPGNEDQLFELIADLMARRLDRGRPLWEVWVIEGLADSKWAILTKLHHCMADGIAATHLLAGLSDESMSDSFASNIHTTMQSQSASVRRGGFRVNPSEALTASTAVMAGIVRAAKGASEIAAGVLSPAASSLNGPISDLRRYSAAKVPLADVEQVCRKFDVTINDVALAAITESYRNVFIQRGERPRFDSLRTLVPVSTRSNSALSKTDNRVSLMLPNLPVDQENPLQRLRIVHSRLTRAKAGGQRQFGNTLMAIANRLPFPMTAWAVGLLMRLPQRGVVTVATNVPGPRRPLQIMGRRVLDLYPVSPIAMQLRTSVAMLSYADDLYFGILADYDVVADAGQLARGIEDAVARLVAISKRRKVTRRRGALSLVV</sequence>
<comment type="function">
    <text evidence="1">Catalyzes the terminal and only committed step in triacylglycerol synthesis by using diacylglycerol and fatty acyl CoA as substrates. Required for storage lipid synthesis.</text>
</comment>
<comment type="catalytic activity">
    <reaction evidence="1">
        <text>an acyl-CoA + a 1,2-diacyl-sn-glycerol = a triacyl-sn-glycerol + CoA</text>
        <dbReference type="Rhea" id="RHEA:10868"/>
        <dbReference type="ChEBI" id="CHEBI:17815"/>
        <dbReference type="ChEBI" id="CHEBI:57287"/>
        <dbReference type="ChEBI" id="CHEBI:58342"/>
        <dbReference type="ChEBI" id="CHEBI:64615"/>
        <dbReference type="EC" id="2.3.1.20"/>
    </reaction>
</comment>
<comment type="pathway">
    <text>Glycerolipid metabolism; triacylglycerol biosynthesis.</text>
</comment>
<comment type="induction">
    <text evidence="3">A member of the dormancy regulon. Induced in response to reduced oxygen tension (hypoxia) and low levels of nitric oxide (NO).</text>
</comment>
<comment type="similarity">
    <text evidence="4">Belongs to the long-chain O-acyltransferase family.</text>
</comment>
<proteinExistence type="evidence at transcript level"/>
<protein>
    <recommendedName>
        <fullName>Probable diacyglycerol O-acyltransferase tgs1</fullName>
        <shortName>TGS1</shortName>
        <ecNumber evidence="1">2.3.1.20</ecNumber>
    </recommendedName>
    <alternativeName>
        <fullName>Probable triacylglycerol synthase tgs1</fullName>
    </alternativeName>
</protein>
<name>TGS1_MYCTO</name>